<comment type="function">
    <text evidence="8 9">Endo-acting xylanase which specifically cleaves internal linkages on the xylan backbone, releasing xylooligosaccharides. Is able to hydrolyze oat spelt xylan, the arabinoxylans from wheat and rye, and glucuronoxylan. Also displays very low activity against xylooligosaccharides. During the xylan degradation process, Xyn10C may act on the soluble xylans and long xylooligosaccharides products released by the secreted xylanases Xyn11A, Xyn11B and Xyn10A.</text>
</comment>
<comment type="catalytic activity">
    <reaction evidence="8 9">
        <text>Endohydrolysis of (1-&gt;4)-beta-D-xylosidic linkages in xylans.</text>
        <dbReference type="EC" id="3.2.1.8"/>
    </reaction>
</comment>
<comment type="pathway">
    <text>Glycan degradation; xylan degradation.</text>
</comment>
<comment type="subcellular location">
    <subcellularLocation>
        <location evidence="11">Cell outer membrane</location>
        <topology evidence="11">Lipid-anchor</topology>
    </subcellularLocation>
    <text>Is predominantly associated with the cell membrane.</text>
</comment>
<comment type="induction">
    <text evidence="7">Induced when the bacterium is cultured on xylan or beta-glucan but not on medium containing mannan. Is repressed by glucose.</text>
</comment>
<comment type="domain">
    <text evidence="6 8 9">The N-terminal CBM15 domain binds xylan, including decorated xylans and xylooligosaccharides, but the physiological role of this domain is unclear. It may act as a product capture system: large xylooligosaccharides generated by Xyn10C would bind to CBM15 and this would restrict the diffusion of these polymers into the environment and therefore increase the selective utilization of these molecules by C.japonicus. Xylanase activity resides in the C-terminal domain.</text>
</comment>
<comment type="similarity">
    <text evidence="10">Belongs to the glycosyl hydrolase 10 (cellulase F) family.</text>
</comment>
<gene>
    <name type="primary">xyn10C</name>
    <name type="synonym">xynF</name>
</gene>
<evidence type="ECO:0000250" key="1"/>
<evidence type="ECO:0000255" key="2">
    <source>
        <dbReference type="PROSITE-ProRule" id="PRU00303"/>
    </source>
</evidence>
<evidence type="ECO:0000255" key="3">
    <source>
        <dbReference type="PROSITE-ProRule" id="PRU01095"/>
    </source>
</evidence>
<evidence type="ECO:0000255" key="4">
    <source>
        <dbReference type="PROSITE-ProRule" id="PRU01096"/>
    </source>
</evidence>
<evidence type="ECO:0000256" key="5">
    <source>
        <dbReference type="SAM" id="MobiDB-lite"/>
    </source>
</evidence>
<evidence type="ECO:0000269" key="6">
    <source>
    </source>
</evidence>
<evidence type="ECO:0000269" key="7">
    <source>
    </source>
</evidence>
<evidence type="ECO:0000269" key="8">
    <source>
    </source>
</evidence>
<evidence type="ECO:0000269" key="9">
    <source>
    </source>
</evidence>
<evidence type="ECO:0000305" key="10"/>
<evidence type="ECO:0000305" key="11">
    <source>
    </source>
</evidence>
<evidence type="ECO:0000305" key="12">
    <source>
    </source>
</evidence>
<evidence type="ECO:0007829" key="13">
    <source>
        <dbReference type="PDB" id="1GNY"/>
    </source>
</evidence>
<evidence type="ECO:0007829" key="14">
    <source>
        <dbReference type="PDB" id="1US2"/>
    </source>
</evidence>
<keyword id="KW-0002">3D-structure</keyword>
<keyword id="KW-0119">Carbohydrate metabolism</keyword>
<keyword id="KW-0998">Cell outer membrane</keyword>
<keyword id="KW-1015">Disulfide bond</keyword>
<keyword id="KW-0326">Glycosidase</keyword>
<keyword id="KW-0378">Hydrolase</keyword>
<keyword id="KW-0449">Lipoprotein</keyword>
<keyword id="KW-0472">Membrane</keyword>
<keyword id="KW-0564">Palmitate</keyword>
<keyword id="KW-0624">Polysaccharide degradation</keyword>
<keyword id="KW-0732">Signal</keyword>
<keyword id="KW-0858">Xylan degradation</keyword>
<proteinExistence type="evidence at protein level"/>
<name>XY10C_CELJA</name>
<dbReference type="EC" id="3.2.1.8"/>
<dbReference type="EMBL" id="Z48928">
    <property type="protein sequence ID" value="CAA88764.2"/>
    <property type="molecule type" value="Genomic_DNA"/>
</dbReference>
<dbReference type="PIR" id="S59634">
    <property type="entry name" value="S59634"/>
</dbReference>
<dbReference type="PDB" id="1GNY">
    <property type="method" value="X-ray"/>
    <property type="resolution" value="1.63 A"/>
    <property type="chains" value="A=91-243"/>
</dbReference>
<dbReference type="PDB" id="1US2">
    <property type="method" value="X-ray"/>
    <property type="resolution" value="1.85 A"/>
    <property type="chains" value="A=86-606"/>
</dbReference>
<dbReference type="PDB" id="1US3">
    <property type="method" value="X-ray"/>
    <property type="resolution" value="1.85 A"/>
    <property type="chains" value="A=86-606"/>
</dbReference>
<dbReference type="PDBsum" id="1GNY"/>
<dbReference type="PDBsum" id="1US2"/>
<dbReference type="PDBsum" id="1US3"/>
<dbReference type="SMR" id="Q59675"/>
<dbReference type="DrugBank" id="DB03389">
    <property type="generic name" value="alpha-D-Xylopyranose"/>
</dbReference>
<dbReference type="CAZy" id="CBM15">
    <property type="family name" value="Carbohydrate-Binding Module Family 15"/>
</dbReference>
<dbReference type="CAZy" id="GH10">
    <property type="family name" value="Glycoside Hydrolase Family 10"/>
</dbReference>
<dbReference type="BRENDA" id="3.2.1.8">
    <property type="organism ID" value="5103"/>
</dbReference>
<dbReference type="UniPathway" id="UPA00114"/>
<dbReference type="EvolutionaryTrace" id="Q59675"/>
<dbReference type="GO" id="GO:0009279">
    <property type="term" value="C:cell outer membrane"/>
    <property type="evidence" value="ECO:0007669"/>
    <property type="project" value="UniProtKB-SubCell"/>
</dbReference>
<dbReference type="GO" id="GO:0031176">
    <property type="term" value="F:endo-1,4-beta-xylanase activity"/>
    <property type="evidence" value="ECO:0007669"/>
    <property type="project" value="UniProtKB-EC"/>
</dbReference>
<dbReference type="GO" id="GO:0045493">
    <property type="term" value="P:xylan catabolic process"/>
    <property type="evidence" value="ECO:0007669"/>
    <property type="project" value="UniProtKB-UniPathway"/>
</dbReference>
<dbReference type="Gene3D" id="2.60.120.260">
    <property type="entry name" value="Galactose-binding domain-like"/>
    <property type="match status" value="1"/>
</dbReference>
<dbReference type="Gene3D" id="3.20.20.80">
    <property type="entry name" value="Glycosidases"/>
    <property type="match status" value="1"/>
</dbReference>
<dbReference type="InterPro" id="IPR005088">
    <property type="entry name" value="CBM15"/>
</dbReference>
<dbReference type="InterPro" id="IPR008979">
    <property type="entry name" value="Galactose-bd-like_sf"/>
</dbReference>
<dbReference type="InterPro" id="IPR044846">
    <property type="entry name" value="GH10"/>
</dbReference>
<dbReference type="InterPro" id="IPR031158">
    <property type="entry name" value="GH10_AS"/>
</dbReference>
<dbReference type="InterPro" id="IPR001000">
    <property type="entry name" value="GH10_dom"/>
</dbReference>
<dbReference type="InterPro" id="IPR017853">
    <property type="entry name" value="Glycoside_hydrolase_SF"/>
</dbReference>
<dbReference type="PANTHER" id="PTHR31490:SF88">
    <property type="entry name" value="BETA-XYLANASE"/>
    <property type="match status" value="1"/>
</dbReference>
<dbReference type="PANTHER" id="PTHR31490">
    <property type="entry name" value="GLYCOSYL HYDROLASE"/>
    <property type="match status" value="1"/>
</dbReference>
<dbReference type="Pfam" id="PF03426">
    <property type="entry name" value="CBM_15"/>
    <property type="match status" value="1"/>
</dbReference>
<dbReference type="Pfam" id="PF00331">
    <property type="entry name" value="Glyco_hydro_10"/>
    <property type="match status" value="1"/>
</dbReference>
<dbReference type="PRINTS" id="PR00134">
    <property type="entry name" value="GLHYDRLASE10"/>
</dbReference>
<dbReference type="SMART" id="SM00633">
    <property type="entry name" value="Glyco_10"/>
    <property type="match status" value="1"/>
</dbReference>
<dbReference type="SUPFAM" id="SSF51445">
    <property type="entry name" value="(Trans)glycosidases"/>
    <property type="match status" value="1"/>
</dbReference>
<dbReference type="SUPFAM" id="SSF49785">
    <property type="entry name" value="Galactose-binding domain-like"/>
    <property type="match status" value="1"/>
</dbReference>
<dbReference type="PROSITE" id="PS51759">
    <property type="entry name" value="CBM15"/>
    <property type="match status" value="1"/>
</dbReference>
<dbReference type="PROSITE" id="PS00591">
    <property type="entry name" value="GH10_1"/>
    <property type="match status" value="1"/>
</dbReference>
<dbReference type="PROSITE" id="PS51760">
    <property type="entry name" value="GH10_2"/>
    <property type="match status" value="1"/>
</dbReference>
<dbReference type="PROSITE" id="PS51257">
    <property type="entry name" value="PROKAR_LIPOPROTEIN"/>
    <property type="match status" value="1"/>
</dbReference>
<protein>
    <recommendedName>
        <fullName>Endo-beta-1,4-xylanase Xyn10C</fullName>
        <shortName>Xylanase 10C</shortName>
        <ecNumber>3.2.1.8</ecNumber>
    </recommendedName>
    <alternativeName>
        <fullName>XYLF</fullName>
    </alternativeName>
</protein>
<organism>
    <name type="scientific">Cellvibrio japonicus</name>
    <name type="common">Pseudomonas fluorescens subsp. cellulosa</name>
    <dbReference type="NCBI Taxonomy" id="155077"/>
    <lineage>
        <taxon>Bacteria</taxon>
        <taxon>Pseudomonadati</taxon>
        <taxon>Pseudomonadota</taxon>
        <taxon>Gammaproteobacteria</taxon>
        <taxon>Cellvibrionales</taxon>
        <taxon>Cellvibrionaceae</taxon>
        <taxon>Cellvibrio</taxon>
    </lineage>
</organism>
<accession>Q59675</accession>
<feature type="signal peptide" evidence="2">
    <location>
        <begin position="1"/>
        <end position="19"/>
    </location>
</feature>
<feature type="chain" id="PRO_5000147609" description="Endo-beta-1,4-xylanase Xyn10C">
    <location>
        <begin position="20"/>
        <end position="606"/>
    </location>
</feature>
<feature type="domain" description="CBM15" evidence="3">
    <location>
        <begin position="91"/>
        <end position="242"/>
    </location>
</feature>
<feature type="domain" description="GH10" evidence="4">
    <location>
        <begin position="245"/>
        <end position="596"/>
    </location>
</feature>
<feature type="region of interest" description="Disordered" evidence="5">
    <location>
        <begin position="23"/>
        <end position="64"/>
    </location>
</feature>
<feature type="compositionally biased region" description="Low complexity" evidence="5">
    <location>
        <begin position="29"/>
        <end position="64"/>
    </location>
</feature>
<feature type="active site" description="Proton donor" evidence="1">
    <location>
        <position position="385"/>
    </location>
</feature>
<feature type="active site" description="Nucleophile" evidence="12">
    <location>
        <position position="497"/>
    </location>
</feature>
<feature type="binding site">
    <location>
        <position position="106"/>
    </location>
    <ligand>
        <name>a carbohydrate</name>
        <dbReference type="ChEBI" id="CHEBI:16646"/>
    </ligand>
</feature>
<feature type="binding site">
    <location>
        <position position="171"/>
    </location>
    <ligand>
        <name>a carbohydrate</name>
        <dbReference type="ChEBI" id="CHEBI:16646"/>
    </ligand>
</feature>
<feature type="binding site">
    <location>
        <position position="217"/>
    </location>
    <ligand>
        <name>a carbohydrate</name>
        <dbReference type="ChEBI" id="CHEBI:16646"/>
    </ligand>
</feature>
<feature type="binding site">
    <location>
        <begin position="296"/>
        <end position="299"/>
    </location>
    <ligand>
        <name>substrate</name>
    </ligand>
</feature>
<feature type="binding site">
    <location>
        <position position="332"/>
    </location>
    <ligand>
        <name>substrate</name>
    </ligand>
</feature>
<feature type="binding site">
    <location>
        <position position="384"/>
    </location>
    <ligand>
        <name>substrate</name>
    </ligand>
</feature>
<feature type="binding site">
    <location>
        <position position="552"/>
    </location>
    <ligand>
        <name>substrate</name>
    </ligand>
</feature>
<feature type="lipid moiety-binding region" description="N-palmitoyl cysteine" evidence="2">
    <location>
        <position position="20"/>
    </location>
</feature>
<feature type="lipid moiety-binding region" description="S-diacylglycerol cysteine" evidence="2">
    <location>
        <position position="20"/>
    </location>
</feature>
<feature type="disulfide bond" evidence="3 6">
    <location>
        <begin position="183"/>
        <end position="200"/>
    </location>
</feature>
<feature type="mutagenesis site" description="Significantly reduces the catalytic activity against xylotetraose and xylan. Also modifies the cleavage pattern of xylotetraose." evidence="8">
    <original>Y</original>
    <variation>A</variation>
    <location>
        <position position="340"/>
    </location>
</feature>
<feature type="strand" evidence="13">
    <location>
        <begin position="92"/>
        <end position="96"/>
    </location>
</feature>
<feature type="strand" evidence="13">
    <location>
        <begin position="99"/>
        <end position="102"/>
    </location>
</feature>
<feature type="strand" evidence="13">
    <location>
        <begin position="104"/>
        <end position="107"/>
    </location>
</feature>
<feature type="strand" evidence="13">
    <location>
        <begin position="109"/>
        <end position="111"/>
    </location>
</feature>
<feature type="strand" evidence="13">
    <location>
        <begin position="117"/>
        <end position="119"/>
    </location>
</feature>
<feature type="strand" evidence="13">
    <location>
        <begin position="122"/>
        <end position="126"/>
    </location>
</feature>
<feature type="strand" evidence="13">
    <location>
        <begin position="132"/>
        <end position="138"/>
    </location>
</feature>
<feature type="strand" evidence="13">
    <location>
        <begin position="140"/>
        <end position="143"/>
    </location>
</feature>
<feature type="strand" evidence="13">
    <location>
        <begin position="148"/>
        <end position="155"/>
    </location>
</feature>
<feature type="helix" evidence="13">
    <location>
        <begin position="157"/>
        <end position="162"/>
    </location>
</feature>
<feature type="strand" evidence="13">
    <location>
        <begin position="165"/>
        <end position="172"/>
    </location>
</feature>
<feature type="strand" evidence="13">
    <location>
        <begin position="175"/>
        <end position="180"/>
    </location>
</feature>
<feature type="helix" evidence="13">
    <location>
        <begin position="187"/>
        <end position="189"/>
    </location>
</feature>
<feature type="strand" evidence="13">
    <location>
        <begin position="192"/>
        <end position="194"/>
    </location>
</feature>
<feature type="strand" evidence="13">
    <location>
        <begin position="196"/>
        <end position="201"/>
    </location>
</feature>
<feature type="strand" evidence="13">
    <location>
        <begin position="210"/>
        <end position="213"/>
    </location>
</feature>
<feature type="strand" evidence="13">
    <location>
        <begin position="216"/>
        <end position="225"/>
    </location>
</feature>
<feature type="strand" evidence="13">
    <location>
        <begin position="228"/>
        <end position="242"/>
    </location>
</feature>
<feature type="helix" evidence="14">
    <location>
        <begin position="251"/>
        <end position="254"/>
    </location>
</feature>
<feature type="strand" evidence="14">
    <location>
        <begin position="256"/>
        <end position="258"/>
    </location>
</feature>
<feature type="strand" evidence="14">
    <location>
        <begin position="261"/>
        <end position="266"/>
    </location>
</feature>
<feature type="turn" evidence="14">
    <location>
        <begin position="271"/>
        <end position="273"/>
    </location>
</feature>
<feature type="turn" evidence="14">
    <location>
        <begin position="275"/>
        <end position="277"/>
    </location>
</feature>
<feature type="helix" evidence="14">
    <location>
        <begin position="279"/>
        <end position="288"/>
    </location>
</feature>
<feature type="strand" evidence="14">
    <location>
        <begin position="290"/>
        <end position="296"/>
    </location>
</feature>
<feature type="helix" evidence="14">
    <location>
        <begin position="300"/>
        <end position="303"/>
    </location>
</feature>
<feature type="helix" evidence="14">
    <location>
        <begin position="313"/>
        <end position="324"/>
    </location>
</feature>
<feature type="strand" evidence="14">
    <location>
        <begin position="328"/>
        <end position="335"/>
    </location>
</feature>
<feature type="helix" evidence="14">
    <location>
        <begin position="339"/>
        <end position="341"/>
    </location>
</feature>
<feature type="helix" evidence="14">
    <location>
        <begin position="344"/>
        <end position="347"/>
    </location>
</feature>
<feature type="helix" evidence="14">
    <location>
        <begin position="353"/>
        <end position="374"/>
    </location>
</feature>
<feature type="strand" evidence="14">
    <location>
        <begin position="379"/>
        <end position="385"/>
    </location>
</feature>
<feature type="strand" evidence="14">
    <location>
        <begin position="389"/>
        <end position="392"/>
    </location>
</feature>
<feature type="helix" evidence="14">
    <location>
        <begin position="401"/>
        <end position="405"/>
    </location>
</feature>
<feature type="helix" evidence="14">
    <location>
        <begin position="412"/>
        <end position="423"/>
    </location>
</feature>
<feature type="strand" evidence="14">
    <location>
        <begin position="427"/>
        <end position="435"/>
    </location>
</feature>
<feature type="helix" evidence="14">
    <location>
        <begin position="441"/>
        <end position="455"/>
    </location>
</feature>
<feature type="strand" evidence="14">
    <location>
        <begin position="462"/>
        <end position="465"/>
    </location>
</feature>
<feature type="strand" evidence="14">
    <location>
        <begin position="468"/>
        <end position="472"/>
    </location>
</feature>
<feature type="helix" evidence="14">
    <location>
        <begin position="476"/>
        <end position="487"/>
    </location>
</feature>
<feature type="turn" evidence="14">
    <location>
        <begin position="488"/>
        <end position="490"/>
    </location>
</feature>
<feature type="strand" evidence="14">
    <location>
        <begin position="492"/>
        <end position="503"/>
    </location>
</feature>
<feature type="turn" evidence="14">
    <location>
        <begin position="508"/>
        <end position="513"/>
    </location>
</feature>
<feature type="helix" evidence="14">
    <location>
        <begin position="520"/>
        <end position="540"/>
    </location>
</feature>
<feature type="helix" evidence="14">
    <location>
        <begin position="543"/>
        <end position="545"/>
    </location>
</feature>
<feature type="strand" evidence="14">
    <location>
        <begin position="546"/>
        <end position="552"/>
    </location>
</feature>
<feature type="helix" evidence="14">
    <location>
        <begin position="556"/>
        <end position="558"/>
    </location>
</feature>
<feature type="helix" evidence="14">
    <location>
        <begin position="560"/>
        <end position="564"/>
    </location>
</feature>
<feature type="turn" evidence="14">
    <location>
        <begin position="565"/>
        <end position="571"/>
    </location>
</feature>
<feature type="strand" evidence="14">
    <location>
        <begin position="578"/>
        <end position="580"/>
    </location>
</feature>
<feature type="helix" evidence="14">
    <location>
        <begin position="588"/>
        <end position="598"/>
    </location>
</feature>
<sequence>MKKIQQLLMLSLISSTLIACGGGGGGGSTPTTSSSPQSSSPASTPSSASSSSIISSSSLSSSLSSSSLSSSSLSSSSASSVSSSSVAASEGNVVIEVDMANGWRGNASGSTSHSGITYSADGVTFAALGDGVGAVFDIARPTTLEDAVIAMVVNVSAEFKASEANLQIFAQLKEDWSKGEWDCLAASSELTADTDLTLTCTIDEDDDKFNQTARDVQVGIQAKGTPAGTITIKSVTITLAQEAYSANVDHLRDLAPSDFPIGVAVSNTDSATYNLLTNSREQAVVKKHFNHLTAGNIMKMSYMQPTEGNFNFTNADAFVDWATENNMTVHGHALVWHSDYQVPNFMKNWAGSAEDFLAALDTHITTIVDHYEAKGNLVSWDVVNEAIDDNSPANFRTTDSAFYVKSGNSSVYIERAFQTARAADPAVILYYNDYNIEQNNAKTTKMVDMVKDFQARSIPIDGVGFQMHVCMNYPSIANISAAMKKVVDLGLLVKITELDVAVNQPHCDAYPANKINPLTEAAQLAQKKRYCDVVKAYLDTVPVNQRGGISVWGTTDANTWLDGLYREQFEDEKISWPLLFDNNYNDKPALRGFADALIGTQCTNTH</sequence>
<reference key="1">
    <citation type="journal article" date="1995" name="Biochem. J.">
        <title>Novel cellulose-binding domains, NodB homologues and conserved modular architecture in xylanases from the aerobic soil bacteria Pseudomonas fluorescens subsp. cellulosa and Cellvibrio mixtus.</title>
        <authorList>
            <person name="Millward-Sadler S.J."/>
            <person name="Davidson K."/>
            <person name="Hazlewood G.P."/>
            <person name="Black G.W."/>
            <person name="Gilbert H.J."/>
            <person name="Clarke J.H."/>
        </authorList>
    </citation>
    <scope>NUCLEOTIDE SEQUENCE [GENOMIC DNA]</scope>
    <scope>FUNCTION</scope>
    <scope>CATALYTIC ACTIVITY</scope>
    <scope>SUBSTRATE SPECIFICITY</scope>
    <scope>DOMAIN</scope>
    <source>
        <strain>NCIMB 10462</strain>
    </source>
</reference>
<reference key="2">
    <citation type="submission" date="2003-11" db="EMBL/GenBank/DDBJ databases">
        <authorList>
            <person name="Gilbert H.J."/>
        </authorList>
    </citation>
    <scope>SEQUENCE REVISION</scope>
</reference>
<reference key="3">
    <citation type="journal article" date="2002" name="J. Bacteriol.">
        <title>Evidence for temporal regulation of the two Pseudomonas cellulosa xylanases belonging to glycoside hydrolase family 11.</title>
        <authorList>
            <person name="Emami K."/>
            <person name="Nagy T."/>
            <person name="Fontes C.M."/>
            <person name="Ferreira L.M."/>
            <person name="Gilbert H.J."/>
        </authorList>
    </citation>
    <scope>SUBCELLULAR LOCATION</scope>
    <scope>INDUCTION</scope>
</reference>
<reference key="4">
    <citation type="journal article" date="2001" name="J. Biol. Chem.">
        <title>Structure of a family 15 carbohydrate-binding module in complex with xylopentaose. Evidence that xylan binds in an approximate 3-fold helical conformation.</title>
        <authorList>
            <person name="Szabo L."/>
            <person name="Jamal S."/>
            <person name="Xie H."/>
            <person name="Charnock S.J."/>
            <person name="Bolam D.N."/>
            <person name="Gilbert H.J."/>
            <person name="Davies G.J."/>
        </authorList>
    </citation>
    <scope>X-RAY CRYSTALLOGRAPHY (1.63 ANGSTROMS) OF 91-243 IN COMPLEX WITH XYLOPENTAOSE</scope>
    <scope>DISULFIDE BOND</scope>
    <scope>DOMAIN</scope>
</reference>
<reference key="5">
    <citation type="journal article" date="2004" name="J. Biol. Chem.">
        <title>Structural and biochemical analysis of Cellvibrio japonicus xylanase 10C: how variation in substrate-binding cleft influences the catalytic profile of family GH-10 xylanases.</title>
        <authorList>
            <person name="Pell G."/>
            <person name="Szabo L."/>
            <person name="Charnock S.J."/>
            <person name="Xie H."/>
            <person name="Gloster T.M."/>
            <person name="Davies G.J."/>
            <person name="Gilbert H.J."/>
        </authorList>
    </citation>
    <scope>X-RAY CRYSTALLOGRAPHY (1.85 ANGSTROMS) OF 86-606 OF WILD-TYPE AND MUTANT ALA-385 IN COMPLEX WITH XYLOTETRAOSE</scope>
    <scope>FUNCTION</scope>
    <scope>CATALYTIC ACTIVITY</scope>
    <scope>SUBSTRATE SPECIFICITY</scope>
    <scope>ACTIVE SITE</scope>
    <scope>DOMAIN</scope>
    <scope>MUTAGENESIS OF TYR-340</scope>
</reference>